<evidence type="ECO:0000255" key="1">
    <source>
        <dbReference type="PROSITE-ProRule" id="PRU00267"/>
    </source>
</evidence>
<sequence>VKRPMNAFMVWSQHERRKIMDQWPDMHNAEISKRLGRRWQLLQDSEKIPFVKGAERLRLKHMADYADYKYRP</sequence>
<dbReference type="EMBL" id="M86310">
    <property type="protein sequence ID" value="AAA48523.1"/>
    <property type="molecule type" value="Genomic_DNA"/>
</dbReference>
<dbReference type="PIR" id="I50019">
    <property type="entry name" value="I50019"/>
</dbReference>
<dbReference type="SMR" id="P40634"/>
<dbReference type="eggNOG" id="KOG0527">
    <property type="taxonomic scope" value="Eukaryota"/>
</dbReference>
<dbReference type="GO" id="GO:0005634">
    <property type="term" value="C:nucleus"/>
    <property type="evidence" value="ECO:0007669"/>
    <property type="project" value="UniProtKB-SubCell"/>
</dbReference>
<dbReference type="GO" id="GO:0001228">
    <property type="term" value="F:DNA-binding transcription activator activity, RNA polymerase II-specific"/>
    <property type="evidence" value="ECO:0007669"/>
    <property type="project" value="TreeGrafter"/>
</dbReference>
<dbReference type="GO" id="GO:0000978">
    <property type="term" value="F:RNA polymerase II cis-regulatory region sequence-specific DNA binding"/>
    <property type="evidence" value="ECO:0007669"/>
    <property type="project" value="TreeGrafter"/>
</dbReference>
<dbReference type="GO" id="GO:0007420">
    <property type="term" value="P:brain development"/>
    <property type="evidence" value="ECO:0007669"/>
    <property type="project" value="TreeGrafter"/>
</dbReference>
<dbReference type="GO" id="GO:0048593">
    <property type="term" value="P:camera-type eye morphogenesis"/>
    <property type="evidence" value="ECO:0007669"/>
    <property type="project" value="TreeGrafter"/>
</dbReference>
<dbReference type="GO" id="GO:0000122">
    <property type="term" value="P:negative regulation of transcription by RNA polymerase II"/>
    <property type="evidence" value="ECO:0007669"/>
    <property type="project" value="TreeGrafter"/>
</dbReference>
<dbReference type="GO" id="GO:0030182">
    <property type="term" value="P:neuron differentiation"/>
    <property type="evidence" value="ECO:0007669"/>
    <property type="project" value="TreeGrafter"/>
</dbReference>
<dbReference type="FunFam" id="1.10.30.10:FF:000007">
    <property type="entry name" value="Transcription factor SOX"/>
    <property type="match status" value="1"/>
</dbReference>
<dbReference type="Gene3D" id="1.10.30.10">
    <property type="entry name" value="High mobility group box domain"/>
    <property type="match status" value="1"/>
</dbReference>
<dbReference type="InterPro" id="IPR009071">
    <property type="entry name" value="HMG_box_dom"/>
</dbReference>
<dbReference type="InterPro" id="IPR036910">
    <property type="entry name" value="HMG_box_dom_sf"/>
</dbReference>
<dbReference type="InterPro" id="IPR050140">
    <property type="entry name" value="SRY-related_HMG-box_TF-like"/>
</dbReference>
<dbReference type="PANTHER" id="PTHR10270">
    <property type="entry name" value="SOX TRANSCRIPTION FACTOR"/>
    <property type="match status" value="1"/>
</dbReference>
<dbReference type="PANTHER" id="PTHR10270:SF221">
    <property type="entry name" value="TRANSCRIPTION FACTOR SOX-12"/>
    <property type="match status" value="1"/>
</dbReference>
<dbReference type="Pfam" id="PF00505">
    <property type="entry name" value="HMG_box"/>
    <property type="match status" value="1"/>
</dbReference>
<dbReference type="SMART" id="SM00398">
    <property type="entry name" value="HMG"/>
    <property type="match status" value="1"/>
</dbReference>
<dbReference type="SUPFAM" id="SSF47095">
    <property type="entry name" value="HMG-box"/>
    <property type="match status" value="1"/>
</dbReference>
<dbReference type="PROSITE" id="PS50118">
    <property type="entry name" value="HMG_BOX_2"/>
    <property type="match status" value="1"/>
</dbReference>
<organism>
    <name type="scientific">Alligator mississippiensis</name>
    <name type="common">American alligator</name>
    <dbReference type="NCBI Taxonomy" id="8496"/>
    <lineage>
        <taxon>Eukaryota</taxon>
        <taxon>Metazoa</taxon>
        <taxon>Chordata</taxon>
        <taxon>Craniata</taxon>
        <taxon>Vertebrata</taxon>
        <taxon>Euteleostomi</taxon>
        <taxon>Archelosauria</taxon>
        <taxon>Archosauria</taxon>
        <taxon>Crocodylia</taxon>
        <taxon>Alligatoridae</taxon>
        <taxon>Alligatorinae</taxon>
        <taxon>Alligator</taxon>
    </lineage>
</organism>
<reference key="1">
    <citation type="journal article" date="1993" name="PCR Methods Appl.">
        <title>PCR amplification of SRY-related gene sequences reveals evolutionary conservation of the SRY-box motif.</title>
        <authorList>
            <person name="Coriat A.M."/>
            <person name="Mueller U."/>
            <person name="Harry J.L."/>
            <person name="Uwanogho D."/>
            <person name="Sharpe P.T."/>
        </authorList>
    </citation>
    <scope>NUCLEOTIDE SEQUENCE [GENOMIC DNA]</scope>
</reference>
<comment type="subcellular location">
    <subcellularLocation>
        <location evidence="1">Nucleus</location>
    </subcellularLocation>
</comment>
<feature type="chain" id="PRO_0000048787" description="SRY-related protein ADW2">
    <location>
        <begin position="1" status="less than"/>
        <end position="72" status="greater than"/>
    </location>
</feature>
<feature type="DNA-binding region" description="HMG box" evidence="1">
    <location>
        <begin position="1"/>
        <end position="69"/>
    </location>
</feature>
<feature type="non-terminal residue">
    <location>
        <position position="1"/>
    </location>
</feature>
<feature type="non-terminal residue">
    <location>
        <position position="72"/>
    </location>
</feature>
<protein>
    <recommendedName>
        <fullName>SRY-related protein ADW2</fullName>
    </recommendedName>
</protein>
<keyword id="KW-0238">DNA-binding</keyword>
<keyword id="KW-0539">Nucleus</keyword>
<name>ADW2_ALLMI</name>
<accession>P40634</accession>
<proteinExistence type="inferred from homology"/>